<dbReference type="EC" id="2.1.1.-" evidence="1"/>
<dbReference type="EMBL" id="CH408054">
    <property type="protein sequence ID" value="EDV09433.1"/>
    <property type="molecule type" value="Genomic_DNA"/>
</dbReference>
<dbReference type="SMR" id="B3LT98"/>
<dbReference type="HOGENOM" id="CLU_051532_0_0_1"/>
<dbReference type="OrthoDB" id="5600at4893"/>
<dbReference type="Proteomes" id="UP000008335">
    <property type="component" value="Unassembled WGS sequence"/>
</dbReference>
<dbReference type="GO" id="GO:0005829">
    <property type="term" value="C:cytosol"/>
    <property type="evidence" value="ECO:0007669"/>
    <property type="project" value="TreeGrafter"/>
</dbReference>
<dbReference type="GO" id="GO:0032991">
    <property type="term" value="C:protein-containing complex"/>
    <property type="evidence" value="ECO:0007669"/>
    <property type="project" value="TreeGrafter"/>
</dbReference>
<dbReference type="GO" id="GO:0008757">
    <property type="term" value="F:S-adenosylmethionine-dependent methyltransferase activity"/>
    <property type="evidence" value="ECO:0007669"/>
    <property type="project" value="UniProtKB-ARBA"/>
</dbReference>
<dbReference type="GO" id="GO:0032259">
    <property type="term" value="P:methylation"/>
    <property type="evidence" value="ECO:0007669"/>
    <property type="project" value="UniProtKB-KW"/>
</dbReference>
<dbReference type="Gene3D" id="3.40.50.150">
    <property type="entry name" value="Vaccinia Virus protein VP39"/>
    <property type="match status" value="1"/>
</dbReference>
<dbReference type="InterPro" id="IPR019410">
    <property type="entry name" value="Methyltransf_16"/>
</dbReference>
<dbReference type="InterPro" id="IPR029063">
    <property type="entry name" value="SAM-dependent_MTases_sf"/>
</dbReference>
<dbReference type="PANTHER" id="PTHR14614">
    <property type="entry name" value="HEPATOCELLULAR CARCINOMA-ASSOCIATED ANTIGEN"/>
    <property type="match status" value="1"/>
</dbReference>
<dbReference type="PANTHER" id="PTHR14614:SF109">
    <property type="entry name" value="RIBOSOMAL LYSINE N-METHYLTRANSFERASE 5"/>
    <property type="match status" value="1"/>
</dbReference>
<gene>
    <name type="primary">RKM5</name>
    <name type="ORF">SCRG_05116</name>
</gene>
<name>RKM5_YEAS1</name>
<organism>
    <name type="scientific">Saccharomyces cerevisiae (strain RM11-1a)</name>
    <name type="common">Baker's yeast</name>
    <dbReference type="NCBI Taxonomy" id="285006"/>
    <lineage>
        <taxon>Eukaryota</taxon>
        <taxon>Fungi</taxon>
        <taxon>Dikarya</taxon>
        <taxon>Ascomycota</taxon>
        <taxon>Saccharomycotina</taxon>
        <taxon>Saccharomycetes</taxon>
        <taxon>Saccharomycetales</taxon>
        <taxon>Saccharomycetaceae</taxon>
        <taxon>Saccharomyces</taxon>
    </lineage>
</organism>
<protein>
    <recommendedName>
        <fullName evidence="1">Ribosomal lysine N-methyltransferase 5</fullName>
        <ecNumber evidence="1">2.1.1.-</ecNumber>
    </recommendedName>
</protein>
<keyword id="KW-0489">Methyltransferase</keyword>
<keyword id="KW-0949">S-adenosyl-L-methionine</keyword>
<keyword id="KW-0808">Transferase</keyword>
<comment type="function">
    <text evidence="1">S-adenosyl-L-methionine-dependent protein-lysine N-methyltransferase that monomethylates 60S ribosomal protein L1 (RPL1A and RPL1B) at 'Lys-46'.</text>
</comment>
<comment type="similarity">
    <text evidence="4">Belongs to the class I-like SAM-binding methyltransferase superfamily. RKM5 family.</text>
</comment>
<proteinExistence type="inferred from homology"/>
<feature type="chain" id="PRO_0000411045" description="Ribosomal lysine N-methyltransferase 5">
    <location>
        <begin position="1"/>
        <end position="367"/>
    </location>
</feature>
<feature type="region of interest" description="Disordered" evidence="3">
    <location>
        <begin position="55"/>
        <end position="74"/>
    </location>
</feature>
<feature type="compositionally biased region" description="Basic residues" evidence="3">
    <location>
        <begin position="58"/>
        <end position="68"/>
    </location>
</feature>
<feature type="binding site" evidence="2">
    <location>
        <position position="110"/>
    </location>
    <ligand>
        <name>S-adenosyl-L-methionine</name>
        <dbReference type="ChEBI" id="CHEBI:59789"/>
    </ligand>
</feature>
<feature type="binding site" evidence="2">
    <location>
        <begin position="170"/>
        <end position="172"/>
    </location>
    <ligand>
        <name>S-adenosyl-L-methionine</name>
        <dbReference type="ChEBI" id="CHEBI:59789"/>
    </ligand>
</feature>
<feature type="binding site" evidence="2">
    <location>
        <position position="192"/>
    </location>
    <ligand>
        <name>S-adenosyl-L-methionine</name>
        <dbReference type="ChEBI" id="CHEBI:59789"/>
    </ligand>
</feature>
<feature type="binding site" evidence="2">
    <location>
        <position position="256"/>
    </location>
    <ligand>
        <name>S-adenosyl-L-methionine</name>
        <dbReference type="ChEBI" id="CHEBI:59789"/>
    </ligand>
</feature>
<feature type="binding site" evidence="2">
    <location>
        <position position="288"/>
    </location>
    <ligand>
        <name>S-adenosyl-L-methionine</name>
        <dbReference type="ChEBI" id="CHEBI:59789"/>
    </ligand>
</feature>
<accession>B3LT98</accession>
<reference key="1">
    <citation type="submission" date="2005-03" db="EMBL/GenBank/DDBJ databases">
        <title>Annotation of the Saccharomyces cerevisiae RM11-1a genome.</title>
        <authorList>
            <consortium name="The Broad Institute Genome Sequencing Platform"/>
            <person name="Birren B.W."/>
            <person name="Lander E.S."/>
            <person name="Galagan J.E."/>
            <person name="Nusbaum C."/>
            <person name="Devon K."/>
            <person name="Cuomo C."/>
            <person name="Jaffe D.B."/>
            <person name="Butler J."/>
            <person name="Alvarez P."/>
            <person name="Gnerre S."/>
            <person name="Grabherr M."/>
            <person name="Kleber M."/>
            <person name="Mauceli E.W."/>
            <person name="Brockman W."/>
            <person name="MacCallum I.A."/>
            <person name="Rounsley S."/>
            <person name="Young S.K."/>
            <person name="LaButti K."/>
            <person name="Pushparaj V."/>
            <person name="DeCaprio D."/>
            <person name="Crawford M."/>
            <person name="Koehrsen M."/>
            <person name="Engels R."/>
            <person name="Montgomery P."/>
            <person name="Pearson M."/>
            <person name="Howarth C."/>
            <person name="Larson L."/>
            <person name="Luoma S."/>
            <person name="White J."/>
            <person name="O'Leary S."/>
            <person name="Kodira C.D."/>
            <person name="Zeng Q."/>
            <person name="Yandava C."/>
            <person name="Alvarado L."/>
            <person name="Pratt S."/>
            <person name="Kruglyak L."/>
        </authorList>
    </citation>
    <scope>NUCLEOTIDE SEQUENCE [LARGE SCALE GENOMIC DNA]</scope>
    <source>
        <strain>RM11-1a</strain>
    </source>
</reference>
<evidence type="ECO:0000250" key="1">
    <source>
        <dbReference type="UniProtKB" id="Q12367"/>
    </source>
</evidence>
<evidence type="ECO:0000250" key="2">
    <source>
        <dbReference type="UniProtKB" id="Q9H867"/>
    </source>
</evidence>
<evidence type="ECO:0000256" key="3">
    <source>
        <dbReference type="SAM" id="MobiDB-lite"/>
    </source>
</evidence>
<evidence type="ECO:0000305" key="4"/>
<sequence>MAFKLWLLDEETIYEHVFERYTQLEGQSGKLAQDLGIQDRRGGVLEITFEPSGLEGGRKKKRVRRRNKASSVEEDQNVAVDSYHVSVGQSISSLHSSRDNGNSTTGYVLWSTTPFFINWLLYSTSAAPFRLGSQVEVTCGSSCEGHKLELPRLVDLTGADRGKRGILELGAGISGILPVILGNFVDTYVSTDQKGILNKLKDNIMENLSQLTRKRCISRSLRLELPTVEPVGDADITAASLPSKSTLHLEVAALDWEKINLQDKKTHSLHPELSLIGETCSSVYVIAMDVIYNEYLIDPFLKTLKQLKHWLQTTYNLQFHVLVGIHLRSQEVTTLFLEKAIIEYDFTVYDIVDQVIQESRFNFYLIT</sequence>